<organism>
    <name type="scientific">Shewanella baltica (strain OS195)</name>
    <dbReference type="NCBI Taxonomy" id="399599"/>
    <lineage>
        <taxon>Bacteria</taxon>
        <taxon>Pseudomonadati</taxon>
        <taxon>Pseudomonadota</taxon>
        <taxon>Gammaproteobacteria</taxon>
        <taxon>Alteromonadales</taxon>
        <taxon>Shewanellaceae</taxon>
        <taxon>Shewanella</taxon>
    </lineage>
</organism>
<feature type="chain" id="PRO_0000343599" description="Phosphoglucosamine mutase 1">
    <location>
        <begin position="1"/>
        <end position="445"/>
    </location>
</feature>
<feature type="active site" description="Phosphoserine intermediate" evidence="1">
    <location>
        <position position="102"/>
    </location>
</feature>
<feature type="binding site" description="via phosphate group" evidence="1">
    <location>
        <position position="102"/>
    </location>
    <ligand>
        <name>Mg(2+)</name>
        <dbReference type="ChEBI" id="CHEBI:18420"/>
    </ligand>
</feature>
<feature type="binding site" evidence="1">
    <location>
        <position position="241"/>
    </location>
    <ligand>
        <name>Mg(2+)</name>
        <dbReference type="ChEBI" id="CHEBI:18420"/>
    </ligand>
</feature>
<feature type="binding site" evidence="1">
    <location>
        <position position="243"/>
    </location>
    <ligand>
        <name>Mg(2+)</name>
        <dbReference type="ChEBI" id="CHEBI:18420"/>
    </ligand>
</feature>
<feature type="binding site" evidence="1">
    <location>
        <position position="245"/>
    </location>
    <ligand>
        <name>Mg(2+)</name>
        <dbReference type="ChEBI" id="CHEBI:18420"/>
    </ligand>
</feature>
<feature type="modified residue" description="Phosphoserine" evidence="1">
    <location>
        <position position="102"/>
    </location>
</feature>
<reference key="1">
    <citation type="submission" date="2007-11" db="EMBL/GenBank/DDBJ databases">
        <title>Complete sequence of chromosome of Shewanella baltica OS195.</title>
        <authorList>
            <consortium name="US DOE Joint Genome Institute"/>
            <person name="Copeland A."/>
            <person name="Lucas S."/>
            <person name="Lapidus A."/>
            <person name="Barry K."/>
            <person name="Glavina del Rio T."/>
            <person name="Dalin E."/>
            <person name="Tice H."/>
            <person name="Pitluck S."/>
            <person name="Chain P."/>
            <person name="Malfatti S."/>
            <person name="Shin M."/>
            <person name="Vergez L."/>
            <person name="Schmutz J."/>
            <person name="Larimer F."/>
            <person name="Land M."/>
            <person name="Hauser L."/>
            <person name="Kyrpides N."/>
            <person name="Kim E."/>
            <person name="Brettar I."/>
            <person name="Rodrigues J."/>
            <person name="Konstantinidis K."/>
            <person name="Klappenbach J."/>
            <person name="Hofle M."/>
            <person name="Tiedje J."/>
            <person name="Richardson P."/>
        </authorList>
    </citation>
    <scope>NUCLEOTIDE SEQUENCE [LARGE SCALE GENOMIC DNA]</scope>
    <source>
        <strain>OS195</strain>
    </source>
</reference>
<gene>
    <name evidence="1" type="primary">glmM1</name>
    <name type="ordered locus">Sbal195_3422</name>
</gene>
<name>GLMM1_SHEB9</name>
<sequence length="445" mass="47643">MKERKFFGTDGIRGKVGSGQMTPELALKLGWAAGRVLSRSGTKKVIIGKDTRISGYMFESALEAGLSAAGLNVMLMGPMPTPAVAYLTRTFRAEAGVVISASHNPYYDNGIKFFSTDGSKLDDNLELEIEAELEKPLVCVESHLLGKVSRIEDARGRYIEYCKGNFPAEHTLTGLKIVVDCAHGATYHIAPAVFRELGAEVIAIGDKPNGMNINDKVGATSMGKICETVIAESADLGIALDGDGDRIMMVNSKGEVIDGDQILYILACDAKSRGVLRGGVVGTLMSNLGLDLALQALDIPFARSKVGDRYVMELLKELDWRIGGENSGHILNLDHGTTGDGIVAGILVLAAMRRQNATLEELTSAMEMLPQVLVNVRFEGEHDPLKSDKVKAAQAQVESELGVRGRVLLRKSGTEPLIRVMVEGDDHSAVLAHANLIADAVKSAS</sequence>
<comment type="function">
    <text evidence="1">Catalyzes the conversion of glucosamine-6-phosphate to glucosamine-1-phosphate.</text>
</comment>
<comment type="catalytic activity">
    <reaction evidence="1">
        <text>alpha-D-glucosamine 1-phosphate = D-glucosamine 6-phosphate</text>
        <dbReference type="Rhea" id="RHEA:23424"/>
        <dbReference type="ChEBI" id="CHEBI:58516"/>
        <dbReference type="ChEBI" id="CHEBI:58725"/>
        <dbReference type="EC" id="5.4.2.10"/>
    </reaction>
</comment>
<comment type="cofactor">
    <cofactor evidence="1">
        <name>Mg(2+)</name>
        <dbReference type="ChEBI" id="CHEBI:18420"/>
    </cofactor>
    <text evidence="1">Binds 1 Mg(2+) ion per subunit.</text>
</comment>
<comment type="PTM">
    <text evidence="1">Activated by phosphorylation.</text>
</comment>
<comment type="similarity">
    <text evidence="1">Belongs to the phosphohexose mutase family.</text>
</comment>
<protein>
    <recommendedName>
        <fullName evidence="1">Phosphoglucosamine mutase 1</fullName>
        <ecNumber evidence="1">5.4.2.10</ecNumber>
    </recommendedName>
</protein>
<accession>A9KZX6</accession>
<dbReference type="EC" id="5.4.2.10" evidence="1"/>
<dbReference type="EMBL" id="CP000891">
    <property type="protein sequence ID" value="ABX50584.1"/>
    <property type="molecule type" value="Genomic_DNA"/>
</dbReference>
<dbReference type="SMR" id="A9KZX6"/>
<dbReference type="KEGG" id="sbn:Sbal195_3422"/>
<dbReference type="HOGENOM" id="CLU_016950_7_0_6"/>
<dbReference type="Proteomes" id="UP000000770">
    <property type="component" value="Chromosome"/>
</dbReference>
<dbReference type="GO" id="GO:0005829">
    <property type="term" value="C:cytosol"/>
    <property type="evidence" value="ECO:0007669"/>
    <property type="project" value="TreeGrafter"/>
</dbReference>
<dbReference type="GO" id="GO:0000287">
    <property type="term" value="F:magnesium ion binding"/>
    <property type="evidence" value="ECO:0007669"/>
    <property type="project" value="UniProtKB-UniRule"/>
</dbReference>
<dbReference type="GO" id="GO:0008966">
    <property type="term" value="F:phosphoglucosamine mutase activity"/>
    <property type="evidence" value="ECO:0007669"/>
    <property type="project" value="UniProtKB-UniRule"/>
</dbReference>
<dbReference type="GO" id="GO:0004615">
    <property type="term" value="F:phosphomannomutase activity"/>
    <property type="evidence" value="ECO:0007669"/>
    <property type="project" value="TreeGrafter"/>
</dbReference>
<dbReference type="GO" id="GO:0005975">
    <property type="term" value="P:carbohydrate metabolic process"/>
    <property type="evidence" value="ECO:0007669"/>
    <property type="project" value="InterPro"/>
</dbReference>
<dbReference type="GO" id="GO:0009252">
    <property type="term" value="P:peptidoglycan biosynthetic process"/>
    <property type="evidence" value="ECO:0007669"/>
    <property type="project" value="TreeGrafter"/>
</dbReference>
<dbReference type="GO" id="GO:0006048">
    <property type="term" value="P:UDP-N-acetylglucosamine biosynthetic process"/>
    <property type="evidence" value="ECO:0007669"/>
    <property type="project" value="TreeGrafter"/>
</dbReference>
<dbReference type="CDD" id="cd05802">
    <property type="entry name" value="GlmM"/>
    <property type="match status" value="1"/>
</dbReference>
<dbReference type="FunFam" id="3.30.310.50:FF:000001">
    <property type="entry name" value="Phosphoglucosamine mutase"/>
    <property type="match status" value="1"/>
</dbReference>
<dbReference type="FunFam" id="3.40.120.10:FF:000001">
    <property type="entry name" value="Phosphoglucosamine mutase"/>
    <property type="match status" value="1"/>
</dbReference>
<dbReference type="FunFam" id="3.40.120.10:FF:000003">
    <property type="entry name" value="Phosphoglucosamine mutase"/>
    <property type="match status" value="1"/>
</dbReference>
<dbReference type="Gene3D" id="3.40.120.10">
    <property type="entry name" value="Alpha-D-Glucose-1,6-Bisphosphate, subunit A, domain 3"/>
    <property type="match status" value="3"/>
</dbReference>
<dbReference type="Gene3D" id="3.30.310.50">
    <property type="entry name" value="Alpha-D-phosphohexomutase, C-terminal domain"/>
    <property type="match status" value="1"/>
</dbReference>
<dbReference type="HAMAP" id="MF_01554_B">
    <property type="entry name" value="GlmM_B"/>
    <property type="match status" value="1"/>
</dbReference>
<dbReference type="InterPro" id="IPR005844">
    <property type="entry name" value="A-D-PHexomutase_a/b/a-I"/>
</dbReference>
<dbReference type="InterPro" id="IPR016055">
    <property type="entry name" value="A-D-PHexomutase_a/b/a-I/II/III"/>
</dbReference>
<dbReference type="InterPro" id="IPR005845">
    <property type="entry name" value="A-D-PHexomutase_a/b/a-II"/>
</dbReference>
<dbReference type="InterPro" id="IPR005846">
    <property type="entry name" value="A-D-PHexomutase_a/b/a-III"/>
</dbReference>
<dbReference type="InterPro" id="IPR005843">
    <property type="entry name" value="A-D-PHexomutase_C"/>
</dbReference>
<dbReference type="InterPro" id="IPR036900">
    <property type="entry name" value="A-D-PHexomutase_C_sf"/>
</dbReference>
<dbReference type="InterPro" id="IPR016066">
    <property type="entry name" value="A-D-PHexomutase_CS"/>
</dbReference>
<dbReference type="InterPro" id="IPR005841">
    <property type="entry name" value="Alpha-D-phosphohexomutase_SF"/>
</dbReference>
<dbReference type="InterPro" id="IPR006352">
    <property type="entry name" value="GlmM_bact"/>
</dbReference>
<dbReference type="InterPro" id="IPR050060">
    <property type="entry name" value="Phosphoglucosamine_mutase"/>
</dbReference>
<dbReference type="NCBIfam" id="TIGR01455">
    <property type="entry name" value="glmM"/>
    <property type="match status" value="1"/>
</dbReference>
<dbReference type="NCBIfam" id="NF008139">
    <property type="entry name" value="PRK10887.1"/>
    <property type="match status" value="1"/>
</dbReference>
<dbReference type="PANTHER" id="PTHR42946:SF1">
    <property type="entry name" value="PHOSPHOGLUCOMUTASE (ALPHA-D-GLUCOSE-1,6-BISPHOSPHATE-DEPENDENT)"/>
    <property type="match status" value="1"/>
</dbReference>
<dbReference type="PANTHER" id="PTHR42946">
    <property type="entry name" value="PHOSPHOHEXOSE MUTASE"/>
    <property type="match status" value="1"/>
</dbReference>
<dbReference type="Pfam" id="PF02878">
    <property type="entry name" value="PGM_PMM_I"/>
    <property type="match status" value="1"/>
</dbReference>
<dbReference type="Pfam" id="PF02879">
    <property type="entry name" value="PGM_PMM_II"/>
    <property type="match status" value="1"/>
</dbReference>
<dbReference type="Pfam" id="PF02880">
    <property type="entry name" value="PGM_PMM_III"/>
    <property type="match status" value="1"/>
</dbReference>
<dbReference type="Pfam" id="PF00408">
    <property type="entry name" value="PGM_PMM_IV"/>
    <property type="match status" value="1"/>
</dbReference>
<dbReference type="PRINTS" id="PR00509">
    <property type="entry name" value="PGMPMM"/>
</dbReference>
<dbReference type="SUPFAM" id="SSF55957">
    <property type="entry name" value="Phosphoglucomutase, C-terminal domain"/>
    <property type="match status" value="1"/>
</dbReference>
<dbReference type="SUPFAM" id="SSF53738">
    <property type="entry name" value="Phosphoglucomutase, first 3 domains"/>
    <property type="match status" value="3"/>
</dbReference>
<dbReference type="PROSITE" id="PS00710">
    <property type="entry name" value="PGM_PMM"/>
    <property type="match status" value="1"/>
</dbReference>
<proteinExistence type="inferred from homology"/>
<keyword id="KW-0413">Isomerase</keyword>
<keyword id="KW-0460">Magnesium</keyword>
<keyword id="KW-0479">Metal-binding</keyword>
<keyword id="KW-0597">Phosphoprotein</keyword>
<evidence type="ECO:0000255" key="1">
    <source>
        <dbReference type="HAMAP-Rule" id="MF_01554"/>
    </source>
</evidence>